<name>MOPR_ACIGI</name>
<reference key="1">
    <citation type="journal article" date="1997" name="J. Bacteriol.">
        <title>Expression, inducer spectrum, domain structure, and function of MopR, the regulator of phenol degradation in Acinetobacter calcoaceticus NCIB8250.</title>
        <authorList>
            <person name="Schirmer F."/>
            <person name="Ehrt S."/>
            <person name="Hillen W."/>
        </authorList>
    </citation>
    <scope>NUCLEOTIDE SEQUENCE [GENOMIC DNA]</scope>
    <scope>FUNCTION</scope>
    <scope>ACTIVITY REGULATION</scope>
    <scope>INDUCTION</scope>
    <scope>DOMAIN</scope>
    <source>
        <strain>ATCC 11171 / DSM 590 / CCUG 2491 / LMG 988 / NCIMB 8250 / CIP 63.46 / B94</strain>
    </source>
</reference>
<reference evidence="7 8 9 10" key="2">
    <citation type="journal article" date="2016" name="ACS Chem. Biol.">
        <title>Structural basis of selective aromatic pollutant sensing by the effector binding domain of MopR, an NtrC family transcriptional regulator.</title>
        <authorList>
            <person name="Ray S."/>
            <person name="Gunzburg M.J."/>
            <person name="Wilce M."/>
            <person name="Panjikar S."/>
            <person name="Anand R."/>
        </authorList>
    </citation>
    <scope>X-RAY CRYSTALLOGRAPHY (2.50 ANGSTROMS) OF 1-229 IN COMPLEX WITH PHENOL AND ZINC</scope>
    <scope>SUBUNIT</scope>
    <scope>DOMAIN</scope>
    <scope>MUTAGENESIS OF HIS-106; TRP-134; GLU-178 AND CYS-189</scope>
    <source>
        <strain>ATCC 11171 / DSM 590 / CCUG 2491 / LMG 988 / NCIMB 8250 / CIP 63.46 / B94</strain>
    </source>
</reference>
<proteinExistence type="evidence at protein level"/>
<feature type="chain" id="PRO_0000438296" description="Phenol regulator MopR">
    <location>
        <begin position="1"/>
        <end position="560"/>
    </location>
</feature>
<feature type="domain" description="Sigma-54 factor interaction" evidence="1">
    <location>
        <begin position="245"/>
        <end position="474"/>
    </location>
</feature>
<feature type="binding site" evidence="2">
    <location>
        <position position="106"/>
    </location>
    <ligand>
        <name>phenol</name>
        <dbReference type="ChEBI" id="CHEBI:15882"/>
    </ligand>
</feature>
<feature type="binding site" evidence="2">
    <location>
        <position position="134"/>
    </location>
    <ligand>
        <name>phenol</name>
        <dbReference type="ChEBI" id="CHEBI:15882"/>
    </ligand>
</feature>
<feature type="binding site" evidence="2">
    <location>
        <position position="155"/>
    </location>
    <ligand>
        <name>Zn(2+)</name>
        <dbReference type="ChEBI" id="CHEBI:29105"/>
        <note>structural</note>
    </ligand>
</feature>
<feature type="binding site" evidence="2">
    <location>
        <position position="178"/>
    </location>
    <ligand>
        <name>Zn(2+)</name>
        <dbReference type="ChEBI" id="CHEBI:29105"/>
        <note>structural</note>
    </ligand>
</feature>
<feature type="binding site" evidence="2">
    <location>
        <position position="181"/>
    </location>
    <ligand>
        <name>Zn(2+)</name>
        <dbReference type="ChEBI" id="CHEBI:29105"/>
        <note>structural</note>
    </ligand>
</feature>
<feature type="binding site" evidence="2">
    <location>
        <position position="189"/>
    </location>
    <ligand>
        <name>Zn(2+)</name>
        <dbReference type="ChEBI" id="CHEBI:29105"/>
        <note>structural</note>
    </ligand>
</feature>
<feature type="binding site" evidence="1">
    <location>
        <begin position="273"/>
        <end position="280"/>
    </location>
    <ligand>
        <name>ATP</name>
        <dbReference type="ChEBI" id="CHEBI:30616"/>
    </ligand>
</feature>
<feature type="binding site" evidence="1">
    <location>
        <begin position="336"/>
        <end position="345"/>
    </location>
    <ligand>
        <name>ATP</name>
        <dbReference type="ChEBI" id="CHEBI:30616"/>
    </ligand>
</feature>
<feature type="mutagenesis site" description="17-fold increase in Kd for phenol." evidence="2">
    <original>H</original>
    <variation>A</variation>
    <location>
        <position position="106"/>
    </location>
</feature>
<feature type="mutagenesis site" description="6-fold increase in Kd for phenol." evidence="2">
    <original>W</original>
    <variation>A</variation>
    <location>
        <position position="134"/>
    </location>
</feature>
<feature type="mutagenesis site" description="Exhibits extremely low solubility." evidence="2">
    <original>E</original>
    <variation>A</variation>
    <location>
        <position position="178"/>
    </location>
</feature>
<feature type="mutagenesis site" description="Exhibits extremely low solubility." evidence="2">
    <original>C</original>
    <variation>A</variation>
    <location>
        <position position="189"/>
    </location>
</feature>
<feature type="turn" evidence="11">
    <location>
        <begin position="16"/>
        <end position="20"/>
    </location>
</feature>
<feature type="helix" evidence="12">
    <location>
        <begin position="21"/>
        <end position="24"/>
    </location>
</feature>
<feature type="strand" evidence="12">
    <location>
        <begin position="27"/>
        <end position="30"/>
    </location>
</feature>
<feature type="helix" evidence="12">
    <location>
        <begin position="31"/>
        <end position="33"/>
    </location>
</feature>
<feature type="strand" evidence="12">
    <location>
        <begin position="35"/>
        <end position="38"/>
    </location>
</feature>
<feature type="strand" evidence="12">
    <location>
        <begin position="41"/>
        <end position="43"/>
    </location>
</feature>
<feature type="helix" evidence="12">
    <location>
        <begin position="48"/>
        <end position="62"/>
    </location>
</feature>
<feature type="helix" evidence="12">
    <location>
        <begin position="64"/>
        <end position="89"/>
    </location>
</feature>
<feature type="helix" evidence="12">
    <location>
        <begin position="96"/>
        <end position="99"/>
    </location>
</feature>
<feature type="helix" evidence="12">
    <location>
        <begin position="101"/>
        <end position="108"/>
    </location>
</feature>
<feature type="strand" evidence="12">
    <location>
        <begin position="113"/>
        <end position="122"/>
    </location>
</feature>
<feature type="turn" evidence="12">
    <location>
        <begin position="123"/>
        <end position="126"/>
    </location>
</feature>
<feature type="strand" evidence="12">
    <location>
        <begin position="127"/>
        <end position="136"/>
    </location>
</feature>
<feature type="helix" evidence="12">
    <location>
        <begin position="138"/>
        <end position="146"/>
    </location>
</feature>
<feature type="helix" evidence="12">
    <location>
        <begin position="156"/>
        <end position="170"/>
    </location>
</feature>
<feature type="strand" evidence="12">
    <location>
        <begin position="174"/>
        <end position="180"/>
    </location>
</feature>
<feature type="helix" evidence="12">
    <location>
        <begin position="182"/>
        <end position="184"/>
    </location>
</feature>
<feature type="strand" evidence="12">
    <location>
        <begin position="187"/>
        <end position="195"/>
    </location>
</feature>
<feature type="helix" evidence="12">
    <location>
        <begin position="196"/>
        <end position="198"/>
    </location>
</feature>
<feature type="helix" evidence="11">
    <location>
        <begin position="215"/>
        <end position="222"/>
    </location>
</feature>
<accession>Q43965</accession>
<sequence length="560" mass="63628">MSPAKDVKVYKKILEQNKDIQDLLDKIVFDAQHGQIWFDENRMLLMHTSILGFLRKDLYQMLGLERTKRFFIRCGYQAGMRDAEVTSKLRPNLNEAEAFMAGPQMHGIRGMVQVEVNELHLSHDLKQFYADFNWLNSFEAEVHLSEFGASDQPACWMLLGYACGYSSFVMGQTIIYQETHCVAQGDEHCRIIGKPLSEWENADELIRFMSPDAVSDEIIALQAELNQLKKNIYTEAESDYTMFNAVGESVAYRKVCDLLKKAAGSKVAVLLQGETGVGKEAFARGIHNGSQRQAQPFVAVNCACIPPDLIESELFGVEKGAFTGAVQSRMGKFERAHGGTIFLDEVVELSPRAQAALLRMLQEGEFERVGDSRTRQVDVRLVAATNEDLEQAVKDGKFRADLYYRLNIFPVIIPPLRERREDIPLLINHFLARFENMYNKTLKGLSDKAKNFMMKYDWPGNIRELENLLERATLLTDHQQEIKLDSLFPQHKDLEAVGETAQSLINVEDLFSENFSLDQLEQNIIRSAMDKSQQNVSEAARMLGISRATLDYRLKKITLG</sequence>
<comment type="function">
    <text evidence="3">Involved in the regulation of the phenol degradation pathway. Activates phenol hydroxylase expression in the presence of phenol.</text>
</comment>
<comment type="activity regulation">
    <text evidence="3">Activity is triggered by phenol binding.</text>
</comment>
<comment type="subunit">
    <text evidence="2">Homodimer.</text>
</comment>
<comment type="induction">
    <text evidence="3">Constitutively expressed at a low level from a sigma70-type promoter.</text>
</comment>
<comment type="domain">
    <text evidence="5 6">Contains an N-terminal signal reception (A) domain, followed by a hinge region (B domain), a transcription activation (C) domain and a C-terminal D domain. The A domain directly responds to external signals, the C domain contains the ATP-binding region that provides energy, and the D domain contains a helix-turn-helix DNA binding motif.</text>
</comment>
<dbReference type="EMBL" id="Z69251">
    <property type="protein sequence ID" value="CAA93242.1"/>
    <property type="molecule type" value="Genomic_DNA"/>
</dbReference>
<dbReference type="PDB" id="5KBE">
    <property type="method" value="X-ray"/>
    <property type="resolution" value="2.50 A"/>
    <property type="chains" value="A/B=1-229"/>
</dbReference>
<dbReference type="PDB" id="5KBG">
    <property type="method" value="X-ray"/>
    <property type="resolution" value="2.80 A"/>
    <property type="chains" value="A/B=1-229"/>
</dbReference>
<dbReference type="PDB" id="5KBH">
    <property type="method" value="X-ray"/>
    <property type="resolution" value="2.55 A"/>
    <property type="chains" value="A/B=1-229"/>
</dbReference>
<dbReference type="PDB" id="5KBI">
    <property type="method" value="X-ray"/>
    <property type="resolution" value="2.90 A"/>
    <property type="chains" value="A/B=1-229"/>
</dbReference>
<dbReference type="PDB" id="7VQF">
    <property type="method" value="X-ray"/>
    <property type="resolution" value="2.30 A"/>
    <property type="chains" value="A=1-229"/>
</dbReference>
<dbReference type="PDBsum" id="5KBE"/>
<dbReference type="PDBsum" id="5KBG"/>
<dbReference type="PDBsum" id="5KBH"/>
<dbReference type="PDBsum" id="5KBI"/>
<dbReference type="PDBsum" id="7VQF"/>
<dbReference type="SMR" id="Q43965"/>
<dbReference type="STRING" id="106649.GCA_000829655_03942"/>
<dbReference type="GO" id="GO:0005524">
    <property type="term" value="F:ATP binding"/>
    <property type="evidence" value="ECO:0007669"/>
    <property type="project" value="UniProtKB-KW"/>
</dbReference>
<dbReference type="GO" id="GO:0016887">
    <property type="term" value="F:ATP hydrolysis activity"/>
    <property type="evidence" value="ECO:0007669"/>
    <property type="project" value="InterPro"/>
</dbReference>
<dbReference type="GO" id="GO:0046872">
    <property type="term" value="F:metal ion binding"/>
    <property type="evidence" value="ECO:0007669"/>
    <property type="project" value="UniProtKB-KW"/>
</dbReference>
<dbReference type="GO" id="GO:0043565">
    <property type="term" value="F:sequence-specific DNA binding"/>
    <property type="evidence" value="ECO:0007669"/>
    <property type="project" value="InterPro"/>
</dbReference>
<dbReference type="GO" id="GO:0006355">
    <property type="term" value="P:regulation of DNA-templated transcription"/>
    <property type="evidence" value="ECO:0007669"/>
    <property type="project" value="InterPro"/>
</dbReference>
<dbReference type="CDD" id="cd00009">
    <property type="entry name" value="AAA"/>
    <property type="match status" value="1"/>
</dbReference>
<dbReference type="FunFam" id="1.10.8.60:FF:000014">
    <property type="entry name" value="DNA-binding transcriptional regulator NtrC"/>
    <property type="match status" value="1"/>
</dbReference>
<dbReference type="FunFam" id="3.40.50.300:FF:000006">
    <property type="entry name" value="DNA-binding transcriptional regulator NtrC"/>
    <property type="match status" value="1"/>
</dbReference>
<dbReference type="Gene3D" id="1.10.8.60">
    <property type="match status" value="1"/>
</dbReference>
<dbReference type="Gene3D" id="1.10.10.60">
    <property type="entry name" value="Homeodomain-like"/>
    <property type="match status" value="1"/>
</dbReference>
<dbReference type="Gene3D" id="3.40.50.300">
    <property type="entry name" value="P-loop containing nucleotide triphosphate hydrolases"/>
    <property type="match status" value="1"/>
</dbReference>
<dbReference type="Gene3D" id="3.30.1380.20">
    <property type="entry name" value="Trafficking protein particle complex subunit 3"/>
    <property type="match status" value="1"/>
</dbReference>
<dbReference type="InterPro" id="IPR003593">
    <property type="entry name" value="AAA+_ATPase"/>
</dbReference>
<dbReference type="InterPro" id="IPR009057">
    <property type="entry name" value="Homeodomain-like_sf"/>
</dbReference>
<dbReference type="InterPro" id="IPR002197">
    <property type="entry name" value="HTH_Fis"/>
</dbReference>
<dbReference type="InterPro" id="IPR053774">
    <property type="entry name" value="MopR"/>
</dbReference>
<dbReference type="InterPro" id="IPR024096">
    <property type="entry name" value="NO_sig/Golgi_transp_ligand-bd"/>
</dbReference>
<dbReference type="InterPro" id="IPR027417">
    <property type="entry name" value="P-loop_NTPase"/>
</dbReference>
<dbReference type="InterPro" id="IPR002078">
    <property type="entry name" value="Sigma_54_int"/>
</dbReference>
<dbReference type="InterPro" id="IPR025662">
    <property type="entry name" value="Sigma_54_int_dom_ATP-bd_1"/>
</dbReference>
<dbReference type="InterPro" id="IPR025943">
    <property type="entry name" value="Sigma_54_int_dom_ATP-bd_2"/>
</dbReference>
<dbReference type="InterPro" id="IPR025944">
    <property type="entry name" value="Sigma_54_int_dom_CS"/>
</dbReference>
<dbReference type="InterPro" id="IPR004096">
    <property type="entry name" value="V4R"/>
</dbReference>
<dbReference type="InterPro" id="IPR010523">
    <property type="entry name" value="XylR_N"/>
</dbReference>
<dbReference type="NCBIfam" id="NF041906">
    <property type="entry name" value="V4R_TF_MobR"/>
    <property type="match status" value="1"/>
</dbReference>
<dbReference type="PANTHER" id="PTHR32071:SF121">
    <property type="entry name" value="SIGMA L-DEPENDENT TRANSCRIPTIONAL REGULATOR YQIR-RELATED"/>
    <property type="match status" value="1"/>
</dbReference>
<dbReference type="PANTHER" id="PTHR32071">
    <property type="entry name" value="TRANSCRIPTIONAL REGULATORY PROTEIN"/>
    <property type="match status" value="1"/>
</dbReference>
<dbReference type="Pfam" id="PF02954">
    <property type="entry name" value="HTH_8"/>
    <property type="match status" value="1"/>
</dbReference>
<dbReference type="Pfam" id="PF00158">
    <property type="entry name" value="Sigma54_activat"/>
    <property type="match status" value="1"/>
</dbReference>
<dbReference type="Pfam" id="PF02830">
    <property type="entry name" value="V4R"/>
    <property type="match status" value="1"/>
</dbReference>
<dbReference type="Pfam" id="PF06505">
    <property type="entry name" value="XylR_N"/>
    <property type="match status" value="1"/>
</dbReference>
<dbReference type="PRINTS" id="PR01590">
    <property type="entry name" value="HTHFIS"/>
</dbReference>
<dbReference type="SMART" id="SM00382">
    <property type="entry name" value="AAA"/>
    <property type="match status" value="1"/>
</dbReference>
<dbReference type="SMART" id="SM00989">
    <property type="entry name" value="V4R"/>
    <property type="match status" value="1"/>
</dbReference>
<dbReference type="SUPFAM" id="SSF46689">
    <property type="entry name" value="Homeodomain-like"/>
    <property type="match status" value="1"/>
</dbReference>
<dbReference type="SUPFAM" id="SSF111126">
    <property type="entry name" value="Ligand-binding domain in the NO signalling and Golgi transport"/>
    <property type="match status" value="1"/>
</dbReference>
<dbReference type="SUPFAM" id="SSF52540">
    <property type="entry name" value="P-loop containing nucleoside triphosphate hydrolases"/>
    <property type="match status" value="1"/>
</dbReference>
<dbReference type="PROSITE" id="PS00675">
    <property type="entry name" value="SIGMA54_INTERACT_1"/>
    <property type="match status" value="1"/>
</dbReference>
<dbReference type="PROSITE" id="PS00676">
    <property type="entry name" value="SIGMA54_INTERACT_2"/>
    <property type="match status" value="1"/>
</dbReference>
<dbReference type="PROSITE" id="PS00688">
    <property type="entry name" value="SIGMA54_INTERACT_3"/>
    <property type="match status" value="1"/>
</dbReference>
<dbReference type="PROSITE" id="PS50045">
    <property type="entry name" value="SIGMA54_INTERACT_4"/>
    <property type="match status" value="1"/>
</dbReference>
<protein>
    <recommendedName>
        <fullName evidence="4">Phenol regulator MopR</fullName>
    </recommendedName>
</protein>
<gene>
    <name evidence="4" type="primary">mopR</name>
</gene>
<keyword id="KW-0002">3D-structure</keyword>
<keyword id="KW-0010">Activator</keyword>
<keyword id="KW-0067">ATP-binding</keyword>
<keyword id="KW-0238">DNA-binding</keyword>
<keyword id="KW-0479">Metal-binding</keyword>
<keyword id="KW-0547">Nucleotide-binding</keyword>
<keyword id="KW-0804">Transcription</keyword>
<keyword id="KW-0805">Transcription regulation</keyword>
<keyword id="KW-0862">Zinc</keyword>
<evidence type="ECO:0000255" key="1">
    <source>
        <dbReference type="PROSITE-ProRule" id="PRU00193"/>
    </source>
</evidence>
<evidence type="ECO:0000269" key="2">
    <source>
    </source>
</evidence>
<evidence type="ECO:0000269" key="3">
    <source>
    </source>
</evidence>
<evidence type="ECO:0000303" key="4">
    <source>
    </source>
</evidence>
<evidence type="ECO:0000305" key="5">
    <source>
    </source>
</evidence>
<evidence type="ECO:0000305" key="6">
    <source>
    </source>
</evidence>
<evidence type="ECO:0007744" key="7">
    <source>
        <dbReference type="PDB" id="5KBE"/>
    </source>
</evidence>
<evidence type="ECO:0007744" key="8">
    <source>
        <dbReference type="PDB" id="5KBG"/>
    </source>
</evidence>
<evidence type="ECO:0007744" key="9">
    <source>
        <dbReference type="PDB" id="5KBH"/>
    </source>
</evidence>
<evidence type="ECO:0007744" key="10">
    <source>
        <dbReference type="PDB" id="5KBI"/>
    </source>
</evidence>
<evidence type="ECO:0007829" key="11">
    <source>
        <dbReference type="PDB" id="5KBE"/>
    </source>
</evidence>
<evidence type="ECO:0007829" key="12">
    <source>
        <dbReference type="PDB" id="7VQF"/>
    </source>
</evidence>
<organism>
    <name type="scientific">Acinetobacter guillouiae</name>
    <name type="common">Acinetobacter genomosp. 11</name>
    <dbReference type="NCBI Taxonomy" id="106649"/>
    <lineage>
        <taxon>Bacteria</taxon>
        <taxon>Pseudomonadati</taxon>
        <taxon>Pseudomonadota</taxon>
        <taxon>Gammaproteobacteria</taxon>
        <taxon>Moraxellales</taxon>
        <taxon>Moraxellaceae</taxon>
        <taxon>Acinetobacter</taxon>
    </lineage>
</organism>